<sequence>MSELFKKLMDQIEMPLEMKNSRVFSSADIVEVKVYPESRIWDFRFSFETILPIDFYQELRSRLVTSFETADIKAVFDIEVENAEFSNELLQAYYQEAFKQPTCNSASFKSSFSHLTVSYTDGKVLISAPQFVNNDHFRKNHLPNLEKQFEAFGFGKLSFDIVSNQKMTEEIKHHFESSRQQQIQKASQETLEIQKSLEASIPPEEIPKPVSNFKERIKDRQAAFEKAEITPMAEIETEENRITFEGLVFDVERKTTRTGRHIINFKMTDYTSSFPMQKWAKDDEELKKYDMISKGAWLRVRGNIENNPFTKALTMNVQNVKTIVHKERKDLMPQGEKRVEFHAHTNMSTMDALPTVEQLVAKAAQFGHPAVAITDHGNVQSFPHGYHAGKKNGIKVLFGLEANLVEDRVPIVYNEVDMDMNEATYVVFDVETTGLSAINNDLIQIAASKMHKGNIVEQFDEFIDPGHPLSQFTTDLTGITDQHVKGAKPISQVLQEFQSFCQDTVLVAHNATFDVGFMNANYERHDLPKITQPVIDTLEFARNLYPEYKRHGLGPLTKRFQVSLEHHHMANYDAEATGRLLFIFLKEAKEKHGVNNLLDLNTKIVDDNSYKKARVKHATIYVLNQKGLKNLFKLVSLSNVTYFAGVARIPRTILDQYRDGLLLGTACSDGEVFDTVLSKGVEDAVEVAKYYDFIEVMPPALYEPLLARELIKDEAGIQQIIKDLIEVGRRLDKPVLATGDVHYLEPEDEIYREIIVRSLGQGAMINRPIGRGENAQPAPLPKAHFRTTNEMLDEFAFLGEDLARDIVIKNPNEMVERFEDVEVVKTDLYTPFIENSEEKVAEMTYEKAFEIYGNPLPDIIDLRIEKELTSILGNGFAVIYLASQMLVNRSNERGYLVGSRGSVGSSFVATMIGITEVNPMPPHYICPNPDCKHSEFITDGSVGSGYDLPDKICSECGTPYKKDGQDIPFETFLGFDGDKVPDIDLNFSGDDQPSAHLDVRDIFGEEYAFRAGTVGTVADRTAYGFVKGYERDYGKFYRDAEVDRLAQGSAGVKRTTGQHPGGIVVIPNYMDVYDFTPVQYPADDLTAEWQTTHFNFHDIDENVLKLDVLGHDDPTMIRKLQDLSGIDPKTIPADDPEVMKLFSGTEVLGVTEEEIGTPTGMLGIPEFGTNFVRGMVDETHPTTFAELLQLSGLSHGTDVWLGNAQDLIKQGIATLSTVIGCRDDIMVYLMHAGLEPKMAFTIMERVRKGAWLKISEEERNGYISAMRENNVPDWYIESCGKIKYMFPKAHAAAYVLMALRVAYFKVHHPIYYYCAYFSIRAKAFELKTMSAGLDAVKARMADISQKRKINQASNVEIDLFTTLEIVNEMLERGFKFGQLDLYRSDATEFIIDGDTLIPPFVALEGLGENVAKQIVKARNEGEFLSKTELRKRGGLSSTLVEKMSDMGILGSMPEDNQLSLFDDFF</sequence>
<keyword id="KW-0963">Cytoplasm</keyword>
<keyword id="KW-0235">DNA replication</keyword>
<keyword id="KW-0239">DNA-directed DNA polymerase</keyword>
<keyword id="KW-0269">Exonuclease</keyword>
<keyword id="KW-0378">Hydrolase</keyword>
<keyword id="KW-0540">Nuclease</keyword>
<keyword id="KW-0548">Nucleotidyltransferase</keyword>
<keyword id="KW-1185">Reference proteome</keyword>
<keyword id="KW-0808">Transferase</keyword>
<proteinExistence type="inferred from homology"/>
<dbReference type="EC" id="2.7.7.7" evidence="1"/>
<dbReference type="EMBL" id="AE014133">
    <property type="protein sequence ID" value="AAN57903.1"/>
    <property type="molecule type" value="Genomic_DNA"/>
</dbReference>
<dbReference type="RefSeq" id="NP_720597.1">
    <property type="nucleotide sequence ID" value="NC_004350.2"/>
</dbReference>
<dbReference type="RefSeq" id="WP_002263483.1">
    <property type="nucleotide sequence ID" value="NC_004350.2"/>
</dbReference>
<dbReference type="SMR" id="Q8DWE0"/>
<dbReference type="STRING" id="210007.SMU_123"/>
<dbReference type="KEGG" id="smu:SMU_123"/>
<dbReference type="PATRIC" id="fig|210007.7.peg.104"/>
<dbReference type="eggNOG" id="COG2176">
    <property type="taxonomic scope" value="Bacteria"/>
</dbReference>
<dbReference type="HOGENOM" id="CLU_003297_2_0_9"/>
<dbReference type="OrthoDB" id="9804290at2"/>
<dbReference type="PhylomeDB" id="Q8DWE0"/>
<dbReference type="Proteomes" id="UP000002512">
    <property type="component" value="Chromosome"/>
</dbReference>
<dbReference type="GO" id="GO:0005737">
    <property type="term" value="C:cytoplasm"/>
    <property type="evidence" value="ECO:0007669"/>
    <property type="project" value="UniProtKB-SubCell"/>
</dbReference>
<dbReference type="GO" id="GO:0008408">
    <property type="term" value="F:3'-5' exonuclease activity"/>
    <property type="evidence" value="ECO:0007669"/>
    <property type="project" value="UniProtKB-UniRule"/>
</dbReference>
<dbReference type="GO" id="GO:0003677">
    <property type="term" value="F:DNA binding"/>
    <property type="evidence" value="ECO:0007669"/>
    <property type="project" value="UniProtKB-UniRule"/>
</dbReference>
<dbReference type="GO" id="GO:0003887">
    <property type="term" value="F:DNA-directed DNA polymerase activity"/>
    <property type="evidence" value="ECO:0007669"/>
    <property type="project" value="UniProtKB-UniRule"/>
</dbReference>
<dbReference type="GO" id="GO:0006261">
    <property type="term" value="P:DNA-templated DNA replication"/>
    <property type="evidence" value="ECO:0007669"/>
    <property type="project" value="UniProtKB-UniRule"/>
</dbReference>
<dbReference type="CDD" id="cd06127">
    <property type="entry name" value="DEDDh"/>
    <property type="match status" value="1"/>
</dbReference>
<dbReference type="CDD" id="cd07435">
    <property type="entry name" value="PHP_PolIIIA_POLC"/>
    <property type="match status" value="1"/>
</dbReference>
<dbReference type="CDD" id="cd04484">
    <property type="entry name" value="polC_OBF"/>
    <property type="match status" value="1"/>
</dbReference>
<dbReference type="FunFam" id="3.30.420.10:FF:000045">
    <property type="entry name" value="3'-5' exonuclease DinG"/>
    <property type="match status" value="1"/>
</dbReference>
<dbReference type="Gene3D" id="1.10.150.870">
    <property type="match status" value="1"/>
</dbReference>
<dbReference type="Gene3D" id="3.30.1900.20">
    <property type="match status" value="1"/>
</dbReference>
<dbReference type="Gene3D" id="6.10.140.1510">
    <property type="match status" value="1"/>
</dbReference>
<dbReference type="Gene3D" id="3.20.20.140">
    <property type="entry name" value="Metal-dependent hydrolases"/>
    <property type="match status" value="1"/>
</dbReference>
<dbReference type="Gene3D" id="2.40.50.140">
    <property type="entry name" value="Nucleic acid-binding proteins"/>
    <property type="match status" value="1"/>
</dbReference>
<dbReference type="Gene3D" id="1.10.150.700">
    <property type="entry name" value="PolC, middle finger domain"/>
    <property type="match status" value="1"/>
</dbReference>
<dbReference type="Gene3D" id="3.30.420.10">
    <property type="entry name" value="Ribonuclease H-like superfamily/Ribonuclease H"/>
    <property type="match status" value="1"/>
</dbReference>
<dbReference type="HAMAP" id="MF_00356">
    <property type="entry name" value="DNApol_PolC"/>
    <property type="match status" value="1"/>
</dbReference>
<dbReference type="InterPro" id="IPR011708">
    <property type="entry name" value="DNA_pol3_alpha_NTPase_dom"/>
</dbReference>
<dbReference type="InterPro" id="IPR040982">
    <property type="entry name" value="DNA_pol3_finger"/>
</dbReference>
<dbReference type="InterPro" id="IPR024754">
    <property type="entry name" value="DNA_PolC-like_N_II"/>
</dbReference>
<dbReference type="InterPro" id="IPR028112">
    <property type="entry name" value="DNA_PolC-type_N_I"/>
</dbReference>
<dbReference type="InterPro" id="IPR004805">
    <property type="entry name" value="DnaE2/DnaE/PolC"/>
</dbReference>
<dbReference type="InterPro" id="IPR029460">
    <property type="entry name" value="DNAPol_HHH"/>
</dbReference>
<dbReference type="InterPro" id="IPR006054">
    <property type="entry name" value="DnaQ"/>
</dbReference>
<dbReference type="InterPro" id="IPR013520">
    <property type="entry name" value="Exonuclease_RNaseT/DNA_pol3"/>
</dbReference>
<dbReference type="InterPro" id="IPR012340">
    <property type="entry name" value="NA-bd_OB-fold"/>
</dbReference>
<dbReference type="InterPro" id="IPR004013">
    <property type="entry name" value="PHP_dom"/>
</dbReference>
<dbReference type="InterPro" id="IPR003141">
    <property type="entry name" value="Pol/His_phosphatase_N"/>
</dbReference>
<dbReference type="InterPro" id="IPR006308">
    <property type="entry name" value="Pol_III_a_PolC-type_gram_pos"/>
</dbReference>
<dbReference type="InterPro" id="IPR044923">
    <property type="entry name" value="PolC_middle_finger_sf"/>
</dbReference>
<dbReference type="InterPro" id="IPR012337">
    <property type="entry name" value="RNaseH-like_sf"/>
</dbReference>
<dbReference type="InterPro" id="IPR036397">
    <property type="entry name" value="RNaseH_sf"/>
</dbReference>
<dbReference type="NCBIfam" id="TIGR00573">
    <property type="entry name" value="dnaq"/>
    <property type="match status" value="1"/>
</dbReference>
<dbReference type="NCBIfam" id="TIGR01405">
    <property type="entry name" value="polC_Gram_pos"/>
    <property type="match status" value="1"/>
</dbReference>
<dbReference type="NCBIfam" id="NF001688">
    <property type="entry name" value="PRK00448.1"/>
    <property type="match status" value="1"/>
</dbReference>
<dbReference type="PANTHER" id="PTHR32294:SF5">
    <property type="entry name" value="DNA POLYMERASE III POLC-TYPE"/>
    <property type="match status" value="1"/>
</dbReference>
<dbReference type="PANTHER" id="PTHR32294">
    <property type="entry name" value="DNA POLYMERASE III SUBUNIT ALPHA"/>
    <property type="match status" value="1"/>
</dbReference>
<dbReference type="Pfam" id="PF14480">
    <property type="entry name" value="DNA_pol3_a_NI"/>
    <property type="match status" value="1"/>
</dbReference>
<dbReference type="Pfam" id="PF11490">
    <property type="entry name" value="DNA_pol3_a_NII"/>
    <property type="match status" value="1"/>
</dbReference>
<dbReference type="Pfam" id="PF07733">
    <property type="entry name" value="DNA_pol3_alpha"/>
    <property type="match status" value="2"/>
</dbReference>
<dbReference type="Pfam" id="PF17657">
    <property type="entry name" value="DNA_pol3_finger"/>
    <property type="match status" value="1"/>
</dbReference>
<dbReference type="Pfam" id="PF14579">
    <property type="entry name" value="HHH_6"/>
    <property type="match status" value="1"/>
</dbReference>
<dbReference type="Pfam" id="PF02811">
    <property type="entry name" value="PHP"/>
    <property type="match status" value="2"/>
</dbReference>
<dbReference type="Pfam" id="PF00929">
    <property type="entry name" value="RNase_T"/>
    <property type="match status" value="1"/>
</dbReference>
<dbReference type="SMART" id="SM00479">
    <property type="entry name" value="EXOIII"/>
    <property type="match status" value="1"/>
</dbReference>
<dbReference type="SMART" id="SM00481">
    <property type="entry name" value="POLIIIAc"/>
    <property type="match status" value="1"/>
</dbReference>
<dbReference type="SUPFAM" id="SSF50249">
    <property type="entry name" value="Nucleic acid-binding proteins"/>
    <property type="match status" value="1"/>
</dbReference>
<dbReference type="SUPFAM" id="SSF53098">
    <property type="entry name" value="Ribonuclease H-like"/>
    <property type="match status" value="1"/>
</dbReference>
<protein>
    <recommendedName>
        <fullName evidence="1">DNA polymerase III PolC-type</fullName>
        <shortName evidence="1">PolIII</shortName>
        <ecNumber evidence="1">2.7.7.7</ecNumber>
    </recommendedName>
</protein>
<accession>Q8DWE0</accession>
<feature type="chain" id="PRO_0000204597" description="DNA polymerase III PolC-type">
    <location>
        <begin position="1"/>
        <end position="1465"/>
    </location>
</feature>
<feature type="domain" description="Exonuclease">
    <location>
        <begin position="425"/>
        <end position="581"/>
    </location>
</feature>
<comment type="function">
    <text evidence="1">Required for replicative DNA synthesis. This DNA polymerase also exhibits 3' to 5' exonuclease activity.</text>
</comment>
<comment type="catalytic activity">
    <reaction evidence="1">
        <text>DNA(n) + a 2'-deoxyribonucleoside 5'-triphosphate = DNA(n+1) + diphosphate</text>
        <dbReference type="Rhea" id="RHEA:22508"/>
        <dbReference type="Rhea" id="RHEA-COMP:17339"/>
        <dbReference type="Rhea" id="RHEA-COMP:17340"/>
        <dbReference type="ChEBI" id="CHEBI:33019"/>
        <dbReference type="ChEBI" id="CHEBI:61560"/>
        <dbReference type="ChEBI" id="CHEBI:173112"/>
        <dbReference type="EC" id="2.7.7.7"/>
    </reaction>
</comment>
<comment type="subcellular location">
    <subcellularLocation>
        <location evidence="1">Cytoplasm</location>
    </subcellularLocation>
</comment>
<comment type="similarity">
    <text evidence="1">Belongs to the DNA polymerase type-C family. PolC subfamily.</text>
</comment>
<gene>
    <name evidence="1" type="primary">polC</name>
    <name type="ordered locus">SMU_123</name>
</gene>
<organism>
    <name type="scientific">Streptococcus mutans serotype c (strain ATCC 700610 / UA159)</name>
    <dbReference type="NCBI Taxonomy" id="210007"/>
    <lineage>
        <taxon>Bacteria</taxon>
        <taxon>Bacillati</taxon>
        <taxon>Bacillota</taxon>
        <taxon>Bacilli</taxon>
        <taxon>Lactobacillales</taxon>
        <taxon>Streptococcaceae</taxon>
        <taxon>Streptococcus</taxon>
    </lineage>
</organism>
<evidence type="ECO:0000255" key="1">
    <source>
        <dbReference type="HAMAP-Rule" id="MF_00356"/>
    </source>
</evidence>
<reference key="1">
    <citation type="journal article" date="2002" name="Proc. Natl. Acad. Sci. U.S.A.">
        <title>Genome sequence of Streptococcus mutans UA159, a cariogenic dental pathogen.</title>
        <authorList>
            <person name="Ajdic D.J."/>
            <person name="McShan W.M."/>
            <person name="McLaughlin R.E."/>
            <person name="Savic G."/>
            <person name="Chang J."/>
            <person name="Carson M.B."/>
            <person name="Primeaux C."/>
            <person name="Tian R."/>
            <person name="Kenton S."/>
            <person name="Jia H.G."/>
            <person name="Lin S.P."/>
            <person name="Qian Y."/>
            <person name="Li S."/>
            <person name="Zhu H."/>
            <person name="Najar F.Z."/>
            <person name="Lai H."/>
            <person name="White J."/>
            <person name="Roe B.A."/>
            <person name="Ferretti J.J."/>
        </authorList>
    </citation>
    <scope>NUCLEOTIDE SEQUENCE [LARGE SCALE GENOMIC DNA]</scope>
    <source>
        <strain>ATCC 700610 / UA159</strain>
    </source>
</reference>
<name>DPO3_STRMU</name>